<comment type="function">
    <text evidence="1">Catalyzes the reversible isomerization of glucose-6-phosphate to fructose-6-phosphate.</text>
</comment>
<comment type="catalytic activity">
    <reaction evidence="1">
        <text>alpha-D-glucose 6-phosphate = beta-D-fructose 6-phosphate</text>
        <dbReference type="Rhea" id="RHEA:11816"/>
        <dbReference type="ChEBI" id="CHEBI:57634"/>
        <dbReference type="ChEBI" id="CHEBI:58225"/>
        <dbReference type="EC" id="5.3.1.9"/>
    </reaction>
</comment>
<comment type="pathway">
    <text evidence="1">Carbohydrate biosynthesis; gluconeogenesis.</text>
</comment>
<comment type="pathway">
    <text evidence="1">Carbohydrate degradation; glycolysis; D-glyceraldehyde 3-phosphate and glycerone phosphate from D-glucose: step 2/4.</text>
</comment>
<comment type="subcellular location">
    <subcellularLocation>
        <location evidence="1">Cytoplasm</location>
    </subcellularLocation>
</comment>
<comment type="similarity">
    <text evidence="1">Belongs to the GPI family.</text>
</comment>
<name>G6PI1_THIDA</name>
<reference key="1">
    <citation type="journal article" date="2006" name="J. Bacteriol.">
        <title>The genome sequence of the obligately chemolithoautotrophic, facultatively anaerobic bacterium Thiobacillus denitrificans.</title>
        <authorList>
            <person name="Beller H.R."/>
            <person name="Chain P.S."/>
            <person name="Letain T.E."/>
            <person name="Chakicherla A."/>
            <person name="Larimer F.W."/>
            <person name="Richardson P.M."/>
            <person name="Coleman M.A."/>
            <person name="Wood A.P."/>
            <person name="Kelly D.P."/>
        </authorList>
    </citation>
    <scope>NUCLEOTIDE SEQUENCE [LARGE SCALE GENOMIC DNA]</scope>
    <source>
        <strain>ATCC 25259 / T1</strain>
    </source>
</reference>
<gene>
    <name evidence="1" type="primary">pgi1</name>
    <name type="ordered locus">Tbd_0974</name>
</gene>
<dbReference type="EC" id="5.3.1.9" evidence="1"/>
<dbReference type="EMBL" id="CP000116">
    <property type="protein sequence ID" value="AAZ96927.1"/>
    <property type="molecule type" value="Genomic_DNA"/>
</dbReference>
<dbReference type="RefSeq" id="WP_011311486.1">
    <property type="nucleotide sequence ID" value="NC_007404.1"/>
</dbReference>
<dbReference type="SMR" id="Q3SK65"/>
<dbReference type="STRING" id="292415.Tbd_0974"/>
<dbReference type="KEGG" id="tbd:Tbd_0974"/>
<dbReference type="eggNOG" id="COG0166">
    <property type="taxonomic scope" value="Bacteria"/>
</dbReference>
<dbReference type="HOGENOM" id="CLU_017947_3_1_4"/>
<dbReference type="OrthoDB" id="140919at2"/>
<dbReference type="UniPathway" id="UPA00109">
    <property type="reaction ID" value="UER00181"/>
</dbReference>
<dbReference type="UniPathway" id="UPA00138"/>
<dbReference type="Proteomes" id="UP000008291">
    <property type="component" value="Chromosome"/>
</dbReference>
<dbReference type="GO" id="GO:0005829">
    <property type="term" value="C:cytosol"/>
    <property type="evidence" value="ECO:0007669"/>
    <property type="project" value="TreeGrafter"/>
</dbReference>
<dbReference type="GO" id="GO:0097367">
    <property type="term" value="F:carbohydrate derivative binding"/>
    <property type="evidence" value="ECO:0007669"/>
    <property type="project" value="InterPro"/>
</dbReference>
<dbReference type="GO" id="GO:0004347">
    <property type="term" value="F:glucose-6-phosphate isomerase activity"/>
    <property type="evidence" value="ECO:0007669"/>
    <property type="project" value="UniProtKB-UniRule"/>
</dbReference>
<dbReference type="GO" id="GO:0048029">
    <property type="term" value="F:monosaccharide binding"/>
    <property type="evidence" value="ECO:0007669"/>
    <property type="project" value="TreeGrafter"/>
</dbReference>
<dbReference type="GO" id="GO:0006094">
    <property type="term" value="P:gluconeogenesis"/>
    <property type="evidence" value="ECO:0007669"/>
    <property type="project" value="UniProtKB-UniRule"/>
</dbReference>
<dbReference type="GO" id="GO:0051156">
    <property type="term" value="P:glucose 6-phosphate metabolic process"/>
    <property type="evidence" value="ECO:0007669"/>
    <property type="project" value="TreeGrafter"/>
</dbReference>
<dbReference type="GO" id="GO:0006096">
    <property type="term" value="P:glycolytic process"/>
    <property type="evidence" value="ECO:0007669"/>
    <property type="project" value="UniProtKB-UniRule"/>
</dbReference>
<dbReference type="CDD" id="cd05015">
    <property type="entry name" value="SIS_PGI_1"/>
    <property type="match status" value="1"/>
</dbReference>
<dbReference type="CDD" id="cd05016">
    <property type="entry name" value="SIS_PGI_2"/>
    <property type="match status" value="1"/>
</dbReference>
<dbReference type="FunFam" id="3.40.50.10490:FF:000004">
    <property type="entry name" value="Glucose-6-phosphate isomerase"/>
    <property type="match status" value="1"/>
</dbReference>
<dbReference type="Gene3D" id="1.10.1390.10">
    <property type="match status" value="1"/>
</dbReference>
<dbReference type="Gene3D" id="3.40.50.10490">
    <property type="entry name" value="Glucose-6-phosphate isomerase like protein, domain 1"/>
    <property type="match status" value="2"/>
</dbReference>
<dbReference type="HAMAP" id="MF_00473">
    <property type="entry name" value="G6P_isomerase"/>
    <property type="match status" value="1"/>
</dbReference>
<dbReference type="InterPro" id="IPR001672">
    <property type="entry name" value="G6P_Isomerase"/>
</dbReference>
<dbReference type="InterPro" id="IPR023096">
    <property type="entry name" value="G6P_Isomerase_C"/>
</dbReference>
<dbReference type="InterPro" id="IPR018189">
    <property type="entry name" value="Phosphoglucose_isomerase_CS"/>
</dbReference>
<dbReference type="InterPro" id="IPR046348">
    <property type="entry name" value="SIS_dom_sf"/>
</dbReference>
<dbReference type="InterPro" id="IPR035476">
    <property type="entry name" value="SIS_PGI_1"/>
</dbReference>
<dbReference type="InterPro" id="IPR035482">
    <property type="entry name" value="SIS_PGI_2"/>
</dbReference>
<dbReference type="NCBIfam" id="NF001211">
    <property type="entry name" value="PRK00179.1"/>
    <property type="match status" value="1"/>
</dbReference>
<dbReference type="PANTHER" id="PTHR11469">
    <property type="entry name" value="GLUCOSE-6-PHOSPHATE ISOMERASE"/>
    <property type="match status" value="1"/>
</dbReference>
<dbReference type="PANTHER" id="PTHR11469:SF1">
    <property type="entry name" value="GLUCOSE-6-PHOSPHATE ISOMERASE"/>
    <property type="match status" value="1"/>
</dbReference>
<dbReference type="Pfam" id="PF00342">
    <property type="entry name" value="PGI"/>
    <property type="match status" value="1"/>
</dbReference>
<dbReference type="PRINTS" id="PR00662">
    <property type="entry name" value="G6PISOMERASE"/>
</dbReference>
<dbReference type="SUPFAM" id="SSF53697">
    <property type="entry name" value="SIS domain"/>
    <property type="match status" value="1"/>
</dbReference>
<dbReference type="PROSITE" id="PS00765">
    <property type="entry name" value="P_GLUCOSE_ISOMERASE_1"/>
    <property type="match status" value="1"/>
</dbReference>
<dbReference type="PROSITE" id="PS00174">
    <property type="entry name" value="P_GLUCOSE_ISOMERASE_2"/>
    <property type="match status" value="1"/>
</dbReference>
<dbReference type="PROSITE" id="PS51463">
    <property type="entry name" value="P_GLUCOSE_ISOMERASE_3"/>
    <property type="match status" value="1"/>
</dbReference>
<organism>
    <name type="scientific">Thiobacillus denitrificans (strain ATCC 25259 / T1)</name>
    <dbReference type="NCBI Taxonomy" id="292415"/>
    <lineage>
        <taxon>Bacteria</taxon>
        <taxon>Pseudomonadati</taxon>
        <taxon>Pseudomonadota</taxon>
        <taxon>Betaproteobacteria</taxon>
        <taxon>Nitrosomonadales</taxon>
        <taxon>Thiobacillaceae</taxon>
        <taxon>Thiobacillus</taxon>
    </lineage>
</organism>
<proteinExistence type="inferred from homology"/>
<protein>
    <recommendedName>
        <fullName evidence="1">Glucose-6-phosphate isomerase 1</fullName>
        <shortName evidence="1">GPI 1</shortName>
        <ecNumber evidence="1">5.3.1.9</ecNumber>
    </recommendedName>
    <alternativeName>
        <fullName evidence="1">Phosphoglucose isomerase 1</fullName>
        <shortName evidence="1">PGI 1</shortName>
    </alternativeName>
    <alternativeName>
        <fullName evidence="1">Phosphohexose isomerase 1</fullName>
        <shortName evidence="1">PHI 1</shortName>
    </alternativeName>
</protein>
<feature type="chain" id="PRO_0000230939" description="Glucose-6-phosphate isomerase 1">
    <location>
        <begin position="1"/>
        <end position="550"/>
    </location>
</feature>
<feature type="active site" description="Proton donor" evidence="1">
    <location>
        <position position="353"/>
    </location>
</feature>
<feature type="active site" evidence="1">
    <location>
        <position position="384"/>
    </location>
</feature>
<feature type="active site" evidence="1">
    <location>
        <position position="512"/>
    </location>
</feature>
<sequence length="550" mass="61247">MKPLKTLPAWKALEQHFKSMRNFDMRAAFREDAARFETLSLRCGNLLLDYSKNRVTQETMRHLAQLARESELEEMRNAMCTGERINFTEKRAVLHVALRAPVRPALMVEGVDVEREIAKVLHRMQRFVESVHNGSWRGHTGKPIRNVVNIGIGGSDLGPAMVCHALDHYAVENVRVHFVSNLDPSHLAGTLAQLDPETTLFIVASKTFTTLETLANANSAKAWLLAALRAPEAVARHFVALSTNAQAVEAFGIDPENMFIFWDWVGGRYSLWSAIGLSIALQIGWGNFQALLAGAHAMDVHFKEAPLEANMPVILGMLGIWYANFWGTDTYGVFPYDQRLRLLVPFLQQLDMESNGKNVNRANKLVNYNTGPIVWGAPGTNGQHAFFELVHQGTRLIPTDFLVAAVNLTPLADQHEWLLANCLAQTEALLKGKSRAVIEAELIAQGMTRDDARALAPHKVFPGNRPSNTLLYQKLDPHTLGMLIALYEHKVFVQGVIWQINSFDQWGVELGKQLAPPIRAALSSVRVIGEHDGSTQGLIADIRRRRGLST</sequence>
<evidence type="ECO:0000255" key="1">
    <source>
        <dbReference type="HAMAP-Rule" id="MF_00473"/>
    </source>
</evidence>
<accession>Q3SK65</accession>
<keyword id="KW-0963">Cytoplasm</keyword>
<keyword id="KW-0312">Gluconeogenesis</keyword>
<keyword id="KW-0324">Glycolysis</keyword>
<keyword id="KW-0413">Isomerase</keyword>
<keyword id="KW-1185">Reference proteome</keyword>